<feature type="chain" id="PRO_0000191892" description="Transketolase, plasmid">
    <location>
        <begin position="1"/>
        <end position="670"/>
    </location>
</feature>
<feature type="active site" description="Proton donor" evidence="1">
    <location>
        <position position="417"/>
    </location>
</feature>
<feature type="binding site" evidence="1">
    <location>
        <position position="32"/>
    </location>
    <ligand>
        <name>substrate</name>
    </ligand>
</feature>
<feature type="binding site" evidence="1">
    <location>
        <position position="72"/>
    </location>
    <ligand>
        <name>thiamine diphosphate</name>
        <dbReference type="ChEBI" id="CHEBI:58937"/>
    </ligand>
</feature>
<feature type="binding site" evidence="1">
    <location>
        <begin position="120"/>
        <end position="122"/>
    </location>
    <ligand>
        <name>thiamine diphosphate</name>
        <dbReference type="ChEBI" id="CHEBI:58937"/>
    </ligand>
</feature>
<feature type="binding site" evidence="1">
    <location>
        <position position="161"/>
    </location>
    <ligand>
        <name>Mg(2+)</name>
        <dbReference type="ChEBI" id="CHEBI:18420"/>
    </ligand>
</feature>
<feature type="binding site" evidence="1">
    <location>
        <position position="162"/>
    </location>
    <ligand>
        <name>thiamine diphosphate</name>
        <dbReference type="ChEBI" id="CHEBI:58937"/>
    </ligand>
</feature>
<feature type="binding site" evidence="1">
    <location>
        <position position="191"/>
    </location>
    <ligand>
        <name>Mg(2+)</name>
        <dbReference type="ChEBI" id="CHEBI:18420"/>
    </ligand>
</feature>
<feature type="binding site" evidence="1">
    <location>
        <position position="191"/>
    </location>
    <ligand>
        <name>thiamine diphosphate</name>
        <dbReference type="ChEBI" id="CHEBI:58937"/>
    </ligand>
</feature>
<feature type="binding site" evidence="1">
    <location>
        <position position="193"/>
    </location>
    <ligand>
        <name>Mg(2+)</name>
        <dbReference type="ChEBI" id="CHEBI:18420"/>
    </ligand>
</feature>
<feature type="binding site" evidence="1">
    <location>
        <position position="267"/>
    </location>
    <ligand>
        <name>substrate</name>
    </ligand>
</feature>
<feature type="binding site" evidence="1">
    <location>
        <position position="267"/>
    </location>
    <ligand>
        <name>thiamine diphosphate</name>
        <dbReference type="ChEBI" id="CHEBI:58937"/>
    </ligand>
</feature>
<feature type="binding site" evidence="1">
    <location>
        <position position="364"/>
    </location>
    <ligand>
        <name>substrate</name>
    </ligand>
</feature>
<feature type="binding site" evidence="1">
    <location>
        <position position="391"/>
    </location>
    <ligand>
        <name>substrate</name>
    </ligand>
</feature>
<feature type="binding site" evidence="1">
    <location>
        <position position="443"/>
    </location>
    <ligand>
        <name>thiamine diphosphate</name>
        <dbReference type="ChEBI" id="CHEBI:58937"/>
    </ligand>
</feature>
<feature type="binding site" evidence="1">
    <location>
        <position position="467"/>
    </location>
    <ligand>
        <name>substrate</name>
    </ligand>
</feature>
<feature type="binding site" evidence="1">
    <location>
        <position position="475"/>
    </location>
    <ligand>
        <name>substrate</name>
    </ligand>
</feature>
<feature type="binding site" evidence="1">
    <location>
        <position position="526"/>
    </location>
    <ligand>
        <name>substrate</name>
    </ligand>
</feature>
<feature type="site" description="Important for catalytic activity" evidence="1">
    <location>
        <position position="32"/>
    </location>
</feature>
<feature type="site" description="Important for catalytic activity" evidence="1">
    <location>
        <position position="267"/>
    </location>
</feature>
<gene>
    <name type="primary">cbbTP</name>
    <name type="ordered locus">PHG420</name>
</gene>
<dbReference type="EC" id="2.2.1.1"/>
<dbReference type="EMBL" id="M68905">
    <property type="protein sequence ID" value="AAA20194.1"/>
    <property type="molecule type" value="Unassigned_DNA"/>
</dbReference>
<dbReference type="EMBL" id="AY305378">
    <property type="protein sequence ID" value="AAP86169.1"/>
    <property type="molecule type" value="Genomic_DNA"/>
</dbReference>
<dbReference type="EMBL" id="M33562">
    <property type="status" value="NOT_ANNOTATED_CDS"/>
    <property type="molecule type" value="Genomic_DNA"/>
</dbReference>
<dbReference type="PIR" id="C49934">
    <property type="entry name" value="C49934"/>
</dbReference>
<dbReference type="RefSeq" id="WP_011154332.1">
    <property type="nucleotide sequence ID" value="NC_005241.1"/>
</dbReference>
<dbReference type="SMR" id="P21726"/>
<dbReference type="KEGG" id="reh:PHG420"/>
<dbReference type="PATRIC" id="fig|381666.6.peg.348"/>
<dbReference type="eggNOG" id="COG0021">
    <property type="taxonomic scope" value="Bacteria"/>
</dbReference>
<dbReference type="HOGENOM" id="CLU_009227_0_0_4"/>
<dbReference type="OrthoDB" id="8732661at2"/>
<dbReference type="UniPathway" id="UPA00116"/>
<dbReference type="Proteomes" id="UP000008210">
    <property type="component" value="Plasmid megaplasmid pHG1"/>
</dbReference>
<dbReference type="GO" id="GO:0005829">
    <property type="term" value="C:cytosol"/>
    <property type="evidence" value="ECO:0007669"/>
    <property type="project" value="TreeGrafter"/>
</dbReference>
<dbReference type="GO" id="GO:0046872">
    <property type="term" value="F:metal ion binding"/>
    <property type="evidence" value="ECO:0007669"/>
    <property type="project" value="UniProtKB-KW"/>
</dbReference>
<dbReference type="GO" id="GO:0004802">
    <property type="term" value="F:transketolase activity"/>
    <property type="evidence" value="ECO:0007669"/>
    <property type="project" value="UniProtKB-EC"/>
</dbReference>
<dbReference type="GO" id="GO:0006098">
    <property type="term" value="P:pentose-phosphate shunt"/>
    <property type="evidence" value="ECO:0007669"/>
    <property type="project" value="TreeGrafter"/>
</dbReference>
<dbReference type="GO" id="GO:0019253">
    <property type="term" value="P:reductive pentose-phosphate cycle"/>
    <property type="evidence" value="ECO:0007669"/>
    <property type="project" value="UniProtKB-UniPathway"/>
</dbReference>
<dbReference type="CDD" id="cd07033">
    <property type="entry name" value="TPP_PYR_DXS_TK_like"/>
    <property type="match status" value="1"/>
</dbReference>
<dbReference type="CDD" id="cd02012">
    <property type="entry name" value="TPP_TK"/>
    <property type="match status" value="1"/>
</dbReference>
<dbReference type="FunFam" id="3.40.50.920:FF:000003">
    <property type="entry name" value="Transketolase"/>
    <property type="match status" value="1"/>
</dbReference>
<dbReference type="FunFam" id="3.40.50.970:FF:000003">
    <property type="entry name" value="Transketolase"/>
    <property type="match status" value="1"/>
</dbReference>
<dbReference type="FunFam" id="3.40.50.970:FF:000004">
    <property type="entry name" value="Transketolase"/>
    <property type="match status" value="1"/>
</dbReference>
<dbReference type="Gene3D" id="3.40.50.920">
    <property type="match status" value="1"/>
</dbReference>
<dbReference type="Gene3D" id="3.40.50.970">
    <property type="match status" value="2"/>
</dbReference>
<dbReference type="InterPro" id="IPR029061">
    <property type="entry name" value="THDP-binding"/>
</dbReference>
<dbReference type="InterPro" id="IPR009014">
    <property type="entry name" value="Transketo_C/PFOR_II"/>
</dbReference>
<dbReference type="InterPro" id="IPR055152">
    <property type="entry name" value="Transketolase-like_C_2"/>
</dbReference>
<dbReference type="InterPro" id="IPR005475">
    <property type="entry name" value="Transketolase-like_Pyr-bd"/>
</dbReference>
<dbReference type="InterPro" id="IPR005478">
    <property type="entry name" value="Transketolase_bac-like"/>
</dbReference>
<dbReference type="InterPro" id="IPR020826">
    <property type="entry name" value="Transketolase_BS"/>
</dbReference>
<dbReference type="InterPro" id="IPR049557">
    <property type="entry name" value="Transketolase_CS"/>
</dbReference>
<dbReference type="InterPro" id="IPR033247">
    <property type="entry name" value="Transketolase_fam"/>
</dbReference>
<dbReference type="InterPro" id="IPR005474">
    <property type="entry name" value="Transketolase_N"/>
</dbReference>
<dbReference type="NCBIfam" id="TIGR00232">
    <property type="entry name" value="tktlase_bact"/>
    <property type="match status" value="1"/>
</dbReference>
<dbReference type="PANTHER" id="PTHR43522">
    <property type="entry name" value="TRANSKETOLASE"/>
    <property type="match status" value="1"/>
</dbReference>
<dbReference type="PANTHER" id="PTHR43522:SF2">
    <property type="entry name" value="TRANSKETOLASE 1-RELATED"/>
    <property type="match status" value="1"/>
</dbReference>
<dbReference type="Pfam" id="PF02779">
    <property type="entry name" value="Transket_pyr"/>
    <property type="match status" value="1"/>
</dbReference>
<dbReference type="Pfam" id="PF22613">
    <property type="entry name" value="Transketolase_C_1"/>
    <property type="match status" value="1"/>
</dbReference>
<dbReference type="Pfam" id="PF00456">
    <property type="entry name" value="Transketolase_N"/>
    <property type="match status" value="1"/>
</dbReference>
<dbReference type="SMART" id="SM00861">
    <property type="entry name" value="Transket_pyr"/>
    <property type="match status" value="1"/>
</dbReference>
<dbReference type="SUPFAM" id="SSF52518">
    <property type="entry name" value="Thiamin diphosphate-binding fold (THDP-binding)"/>
    <property type="match status" value="2"/>
</dbReference>
<dbReference type="SUPFAM" id="SSF52922">
    <property type="entry name" value="TK C-terminal domain-like"/>
    <property type="match status" value="1"/>
</dbReference>
<dbReference type="PROSITE" id="PS00801">
    <property type="entry name" value="TRANSKETOLASE_1"/>
    <property type="match status" value="1"/>
</dbReference>
<dbReference type="PROSITE" id="PS00802">
    <property type="entry name" value="TRANSKETOLASE_2"/>
    <property type="match status" value="1"/>
</dbReference>
<name>TKTP_CUPNH</name>
<reference key="1">
    <citation type="journal article" date="1993" name="J. Bacteriol.">
        <title>The cbb operons of the facultative chemoautotroph Alcaligenes eutrophus encode phosphoglycolate phosphatase.</title>
        <authorList>
            <person name="Schaeferjohann J."/>
            <person name="Yoo J.-G."/>
            <person name="Kusian B."/>
            <person name="Bowien B."/>
        </authorList>
    </citation>
    <scope>NUCLEOTIDE SEQUENCE [GENOMIC DNA]</scope>
</reference>
<reference key="2">
    <citation type="journal article" date="2003" name="J. Mol. Biol.">
        <title>Complete nucleotide sequence of pHG1: a Ralstonia eutropha H16 megaplasmid encoding key enzymes of H(2)-based lithoautotrophy and anaerobiosis.</title>
        <authorList>
            <person name="Schwartz E."/>
            <person name="Henne A."/>
            <person name="Cramm R."/>
            <person name="Eitinger T."/>
            <person name="Friedrich B."/>
            <person name="Gottschalk G."/>
        </authorList>
    </citation>
    <scope>NUCLEOTIDE SEQUENCE [LARGE SCALE GENOMIC DNA]</scope>
    <source>
        <strain>ATCC 17699 / DSM 428 / KCTC 22496 / NCIMB 10442 / H16 / Stanier 337</strain>
    </source>
</reference>
<reference key="3">
    <citation type="journal article" date="1989" name="Gene">
        <title>Sequence analysis of the chromosomal and plasmid genes encoding phosphoribulokinase from Alcaligenes eutrophus.</title>
        <authorList>
            <person name="Kossmann J."/>
            <person name="Klintworth R."/>
            <person name="Bowien B."/>
        </authorList>
    </citation>
    <scope>NUCLEOTIDE SEQUENCE [GENOMIC DNA] OF 1-77</scope>
</reference>
<evidence type="ECO:0000250" key="1"/>
<evidence type="ECO:0000305" key="2"/>
<sequence length="670" mass="71474">MNAPERIDPAARCANALRFLAADAVELARSGHPGAPMGMAEMAEVVWRRHLRHNPANPAWPDRDRFVLSNGHASMLQYALLHLTGYDLPMSQLRQFRQLHAVTPGHPEVDVTPGVETTTGPLGQGLANAVGMALAEKLLAATFNRPGFDIVDHHTYVFLGDGCLMEGLSHEACSLAGTLGLGKLICLYDDNGISIDGEVAGWFADDTPKRFAAYGWHVIADVDGHDAHALDAALHEAKAERDRPTLICCRTVIGKGAPAKAGGHDVHGAPLGAPEIAAMRTALGWEAEPFTVPADVADAWDARAQGAAREAEWEARFVSYCAAHPELAEEFVRRANGRLPEGFDAELMALLDAPSPLQGKIATRKASQLCLEALTPALPELLGGSADLTGSNLTNVKASVWVNHAGHGNYVSYGVREFGMAAVMNGIALHGGLIPYGGTFMTFSDYSRNAIRMAALMRLRVVHVLTHDSIGLGEDGPTHQPVEHAASLRLIPNNQVWRPCDGAETAYAWLAALQRENGPTCLVLSRQALMPFERDAAQRADIARGGYVLRDVPAPRVVLIATGSEVEIAARAALDLADAGIAARVVSMPCVELFYAQDAAYRDSVLPPGLPRISVEAGATWYWRGVVGEQGLALGIDSFGESAPAEALYQHFGLTPAHVAAAARVLLEDA</sequence>
<accession>P21726</accession>
<organism>
    <name type="scientific">Cupriavidus necator (strain ATCC 17699 / DSM 428 / KCTC 22496 / NCIMB 10442 / H16 / Stanier 337)</name>
    <name type="common">Ralstonia eutropha</name>
    <dbReference type="NCBI Taxonomy" id="381666"/>
    <lineage>
        <taxon>Bacteria</taxon>
        <taxon>Pseudomonadati</taxon>
        <taxon>Pseudomonadota</taxon>
        <taxon>Betaproteobacteria</taxon>
        <taxon>Burkholderiales</taxon>
        <taxon>Burkholderiaceae</taxon>
        <taxon>Cupriavidus</taxon>
    </lineage>
</organism>
<proteinExistence type="inferred from homology"/>
<protein>
    <recommendedName>
        <fullName>Transketolase, plasmid</fullName>
        <shortName>TK</shortName>
        <ecNumber>2.2.1.1</ecNumber>
    </recommendedName>
</protein>
<comment type="function">
    <text evidence="1">Catalyzes the transfer of a two-carbon ketol group from a ketose donor to an aldose acceptor, via a covalent intermediate with the cofactor thiamine pyrophosphate.</text>
</comment>
<comment type="catalytic activity">
    <reaction>
        <text>D-sedoheptulose 7-phosphate + D-glyceraldehyde 3-phosphate = aldehydo-D-ribose 5-phosphate + D-xylulose 5-phosphate</text>
        <dbReference type="Rhea" id="RHEA:10508"/>
        <dbReference type="ChEBI" id="CHEBI:57483"/>
        <dbReference type="ChEBI" id="CHEBI:57737"/>
        <dbReference type="ChEBI" id="CHEBI:58273"/>
        <dbReference type="ChEBI" id="CHEBI:59776"/>
        <dbReference type="EC" id="2.2.1.1"/>
    </reaction>
</comment>
<comment type="cofactor">
    <cofactor evidence="1">
        <name>Mg(2+)</name>
        <dbReference type="ChEBI" id="CHEBI:18420"/>
    </cofactor>
    <cofactor evidence="1">
        <name>Ca(2+)</name>
        <dbReference type="ChEBI" id="CHEBI:29108"/>
    </cofactor>
    <cofactor evidence="1">
        <name>Mn(2+)</name>
        <dbReference type="ChEBI" id="CHEBI:29035"/>
    </cofactor>
    <cofactor evidence="1">
        <name>Co(2+)</name>
        <dbReference type="ChEBI" id="CHEBI:48828"/>
    </cofactor>
    <text evidence="1">Binds 1 Mg(2+) ion per subunit. Can also utilize other divalent metal cations, such as Ca(2+), Mn(2+) and Co(2+).</text>
</comment>
<comment type="cofactor">
    <cofactor evidence="1">
        <name>thiamine diphosphate</name>
        <dbReference type="ChEBI" id="CHEBI:58937"/>
    </cofactor>
    <text evidence="1">Binds 1 thiamine pyrophosphate per subunit.</text>
</comment>
<comment type="pathway">
    <text>Carbohydrate biosynthesis; Calvin cycle.</text>
</comment>
<comment type="subunit">
    <text evidence="1">Homodimer.</text>
</comment>
<comment type="similarity">
    <text evidence="2">Belongs to the transketolase family.</text>
</comment>
<keyword id="KW-0106">Calcium</keyword>
<keyword id="KW-0113">Calvin cycle</keyword>
<keyword id="KW-0460">Magnesium</keyword>
<keyword id="KW-0479">Metal-binding</keyword>
<keyword id="KW-0614">Plasmid</keyword>
<keyword id="KW-1185">Reference proteome</keyword>
<keyword id="KW-0786">Thiamine pyrophosphate</keyword>
<keyword id="KW-0808">Transferase</keyword>
<geneLocation type="plasmid">
    <name>megaplasmid pHG1</name>
</geneLocation>